<organism>
    <name type="scientific">Oryza sativa subsp. japonica</name>
    <name type="common">Rice</name>
    <dbReference type="NCBI Taxonomy" id="39947"/>
    <lineage>
        <taxon>Eukaryota</taxon>
        <taxon>Viridiplantae</taxon>
        <taxon>Streptophyta</taxon>
        <taxon>Embryophyta</taxon>
        <taxon>Tracheophyta</taxon>
        <taxon>Spermatophyta</taxon>
        <taxon>Magnoliopsida</taxon>
        <taxon>Liliopsida</taxon>
        <taxon>Poales</taxon>
        <taxon>Poaceae</taxon>
        <taxon>BOP clade</taxon>
        <taxon>Oryzoideae</taxon>
        <taxon>Oryzeae</taxon>
        <taxon>Oryzinae</taxon>
        <taxon>Oryza</taxon>
        <taxon>Oryza sativa</taxon>
    </lineage>
</organism>
<sequence length="185" mass="21183">MARVYVGNLDPRVTARELEDEFRVFGVLRSVWVARKPPGFAFIDFDDRRDAQDAIRDIDGKNGWRVELSRNASSGRGGRDRYGSSESKCYECGETGHFARECRLRIGSGGLGSGRRRSRSRSRSRSPRYRRSPSYGRRSYSPAGRSPRRRSVSPARARSYSRSPQYNRGRDESPAYDNGYRRSRS</sequence>
<accession>Q69KL9</accession>
<accession>A0A0N7KLN8</accession>
<feature type="chain" id="PRO_0000416995" description="Serine/arginine-rich splicing factor RSZ21A">
    <location>
        <begin position="1"/>
        <end position="185"/>
    </location>
</feature>
<feature type="domain" description="RRM" evidence="4">
    <location>
        <begin position="2"/>
        <end position="73"/>
    </location>
</feature>
<feature type="zinc finger region" description="CCHC-type" evidence="3">
    <location>
        <begin position="87"/>
        <end position="104"/>
    </location>
</feature>
<feature type="region of interest" description="Disordered" evidence="5">
    <location>
        <begin position="109"/>
        <end position="185"/>
    </location>
</feature>
<feature type="compositionally biased region" description="Basic residues" evidence="5">
    <location>
        <begin position="114"/>
        <end position="131"/>
    </location>
</feature>
<feature type="compositionally biased region" description="Low complexity" evidence="5">
    <location>
        <begin position="132"/>
        <end position="145"/>
    </location>
</feature>
<feature type="compositionally biased region" description="Low complexity" evidence="5">
    <location>
        <begin position="152"/>
        <end position="163"/>
    </location>
</feature>
<keyword id="KW-0479">Metal-binding</keyword>
<keyword id="KW-0507">mRNA processing</keyword>
<keyword id="KW-0508">mRNA splicing</keyword>
<keyword id="KW-0539">Nucleus</keyword>
<keyword id="KW-1185">Reference proteome</keyword>
<keyword id="KW-0862">Zinc</keyword>
<keyword id="KW-0863">Zinc-finger</keyword>
<name>RZ21A_ORYSJ</name>
<evidence type="ECO:0000250" key="1"/>
<evidence type="ECO:0000250" key="2">
    <source>
        <dbReference type="UniProtKB" id="O81126"/>
    </source>
</evidence>
<evidence type="ECO:0000255" key="3">
    <source>
        <dbReference type="PROSITE-ProRule" id="PRU00047"/>
    </source>
</evidence>
<evidence type="ECO:0000255" key="4">
    <source>
        <dbReference type="PROSITE-ProRule" id="PRU00176"/>
    </source>
</evidence>
<evidence type="ECO:0000256" key="5">
    <source>
        <dbReference type="SAM" id="MobiDB-lite"/>
    </source>
</evidence>
<evidence type="ECO:0000269" key="6">
    <source>
    </source>
</evidence>
<evidence type="ECO:0000305" key="7"/>
<comment type="function">
    <text evidence="1">Involved in pre-mRNA splicing.</text>
</comment>
<comment type="subcellular location">
    <subcellularLocation>
        <location evidence="2">Nucleus</location>
    </subcellularLocation>
</comment>
<comment type="tissue specificity">
    <text evidence="6">Expressed in roots, leaves and immature seeds.</text>
</comment>
<comment type="PTM">
    <text evidence="1">Extensively phosphorylated on serine residues in the RS domain.</text>
</comment>
<comment type="similarity">
    <text evidence="7">Belongs to the splicing factor SR family.</text>
</comment>
<reference key="1">
    <citation type="journal article" date="2005" name="Nature">
        <title>The map-based sequence of the rice genome.</title>
        <authorList>
            <consortium name="International rice genome sequencing project (IRGSP)"/>
        </authorList>
    </citation>
    <scope>NUCLEOTIDE SEQUENCE [LARGE SCALE GENOMIC DNA]</scope>
    <source>
        <strain>cv. Nipponbare</strain>
    </source>
</reference>
<reference key="2">
    <citation type="journal article" date="2008" name="Nucleic Acids Res.">
        <title>The rice annotation project database (RAP-DB): 2008 update.</title>
        <authorList>
            <consortium name="The rice annotation project (RAP)"/>
        </authorList>
    </citation>
    <scope>GENOME REANNOTATION</scope>
    <source>
        <strain>cv. Nipponbare</strain>
    </source>
</reference>
<reference key="3">
    <citation type="journal article" date="2013" name="Rice">
        <title>Improvement of the Oryza sativa Nipponbare reference genome using next generation sequence and optical map data.</title>
        <authorList>
            <person name="Kawahara Y."/>
            <person name="de la Bastide M."/>
            <person name="Hamilton J.P."/>
            <person name="Kanamori H."/>
            <person name="McCombie W.R."/>
            <person name="Ouyang S."/>
            <person name="Schwartz D.C."/>
            <person name="Tanaka T."/>
            <person name="Wu J."/>
            <person name="Zhou S."/>
            <person name="Childs K.L."/>
            <person name="Davidson R.M."/>
            <person name="Lin H."/>
            <person name="Quesada-Ocampo L."/>
            <person name="Vaillancourt B."/>
            <person name="Sakai H."/>
            <person name="Lee S.S."/>
            <person name="Kim J."/>
            <person name="Numa H."/>
            <person name="Itoh T."/>
            <person name="Buell C.R."/>
            <person name="Matsumoto T."/>
        </authorList>
    </citation>
    <scope>GENOME REANNOTATION</scope>
    <source>
        <strain>cv. Nipponbare</strain>
    </source>
</reference>
<reference key="4">
    <citation type="journal article" date="2003" name="Science">
        <title>Collection, mapping, and annotation of over 28,000 cDNA clones from japonica rice.</title>
        <authorList>
            <consortium name="The rice full-length cDNA consortium"/>
        </authorList>
    </citation>
    <scope>NUCLEOTIDE SEQUENCE [LARGE SCALE MRNA]</scope>
    <source>
        <strain>cv. Nipponbare</strain>
    </source>
</reference>
<reference key="5">
    <citation type="journal article" date="2006" name="Plant Cell">
        <title>The serine/arginine-rich protein family in rice plays important roles in constitutive and alternative splicing of pre-mRNA.</title>
        <authorList>
            <person name="Isshiki M."/>
            <person name="Tsumoto A."/>
            <person name="Shimamoto K."/>
        </authorList>
    </citation>
    <scope>TISSUE SPECIFICITY</scope>
    <scope>GENE FAMILY</scope>
</reference>
<reference key="6">
    <citation type="journal article" date="2010" name="Plant Cell">
        <title>Implementing a rational and consistent nomenclature for serine/arginine-rich protein splicing factors (SR proteins) in plants.</title>
        <authorList>
            <person name="Barta A."/>
            <person name="Kalyna M."/>
            <person name="Reddy A.S."/>
        </authorList>
    </citation>
    <scope>GENE FAMILY</scope>
    <scope>NOMENCLATURE</scope>
</reference>
<gene>
    <name type="primary">RSZ21A</name>
    <name type="synonym">RSZP21A</name>
    <name type="ordered locus">Os06g0187900</name>
    <name type="ordered locus">LOC_Os06g08840</name>
    <name type="ORF">OSJNBb0005A05.14-1</name>
    <name type="ORF">P0470C02.25-1</name>
</gene>
<proteinExistence type="evidence at transcript level"/>
<dbReference type="EMBL" id="AP003508">
    <property type="protein sequence ID" value="BAD72462.1"/>
    <property type="molecule type" value="Genomic_DNA"/>
</dbReference>
<dbReference type="EMBL" id="AP005913">
    <property type="protein sequence ID" value="BAD36521.1"/>
    <property type="molecule type" value="Genomic_DNA"/>
</dbReference>
<dbReference type="EMBL" id="AP008212">
    <property type="protein sequence ID" value="BAF18932.1"/>
    <property type="molecule type" value="Genomic_DNA"/>
</dbReference>
<dbReference type="EMBL" id="AP014962">
    <property type="protein sequence ID" value="BAS96537.1"/>
    <property type="molecule type" value="Genomic_DNA"/>
</dbReference>
<dbReference type="EMBL" id="AK063879">
    <property type="protein sequence ID" value="BAG88899.1"/>
    <property type="molecule type" value="mRNA"/>
</dbReference>
<dbReference type="EMBL" id="AK071765">
    <property type="protein sequence ID" value="BAG92681.1"/>
    <property type="molecule type" value="mRNA"/>
</dbReference>
<dbReference type="RefSeq" id="XP_015640942.1">
    <property type="nucleotide sequence ID" value="XM_015785456.1"/>
</dbReference>
<dbReference type="SMR" id="Q69KL9"/>
<dbReference type="FunCoup" id="Q69KL9">
    <property type="interactions" value="1387"/>
</dbReference>
<dbReference type="STRING" id="39947.Q69KL9"/>
<dbReference type="PaxDb" id="39947-Q69KL9"/>
<dbReference type="EnsemblPlants" id="Os06t0187900-01">
    <property type="protein sequence ID" value="Os06t0187900-01"/>
    <property type="gene ID" value="Os06g0187900"/>
</dbReference>
<dbReference type="EnsemblPlants" id="Os06t0187900-02">
    <property type="protein sequence ID" value="Os06t0187900-02"/>
    <property type="gene ID" value="Os06g0187900"/>
</dbReference>
<dbReference type="Gramene" id="Os06t0187900-01">
    <property type="protein sequence ID" value="Os06t0187900-01"/>
    <property type="gene ID" value="Os06g0187900"/>
</dbReference>
<dbReference type="Gramene" id="Os06t0187900-02">
    <property type="protein sequence ID" value="Os06t0187900-02"/>
    <property type="gene ID" value="Os06g0187900"/>
</dbReference>
<dbReference type="KEGG" id="dosa:Os06g0187900"/>
<dbReference type="eggNOG" id="KOG0107">
    <property type="taxonomic scope" value="Eukaryota"/>
</dbReference>
<dbReference type="HOGENOM" id="CLU_012062_20_1_1"/>
<dbReference type="InParanoid" id="Q69KL9"/>
<dbReference type="OMA" id="HGPLNCK"/>
<dbReference type="OrthoDB" id="5970at2759"/>
<dbReference type="Proteomes" id="UP000000763">
    <property type="component" value="Chromosome 6"/>
</dbReference>
<dbReference type="Proteomes" id="UP000059680">
    <property type="component" value="Chromosome 6"/>
</dbReference>
<dbReference type="GO" id="GO:0016607">
    <property type="term" value="C:nuclear speck"/>
    <property type="evidence" value="ECO:0000318"/>
    <property type="project" value="GO_Central"/>
</dbReference>
<dbReference type="GO" id="GO:0003723">
    <property type="term" value="F:RNA binding"/>
    <property type="evidence" value="ECO:0000318"/>
    <property type="project" value="GO_Central"/>
</dbReference>
<dbReference type="GO" id="GO:0008270">
    <property type="term" value="F:zinc ion binding"/>
    <property type="evidence" value="ECO:0007669"/>
    <property type="project" value="UniProtKB-KW"/>
</dbReference>
<dbReference type="GO" id="GO:0045292">
    <property type="term" value="P:mRNA cis splicing, via spliceosome"/>
    <property type="evidence" value="ECO:0000318"/>
    <property type="project" value="GO_Central"/>
</dbReference>
<dbReference type="CDD" id="cd12373">
    <property type="entry name" value="RRM_SRSF3_like"/>
    <property type="match status" value="1"/>
</dbReference>
<dbReference type="FunFam" id="3.30.70.330:FF:000214">
    <property type="entry name" value="Serine/arginine-rich splicing factor 7"/>
    <property type="match status" value="1"/>
</dbReference>
<dbReference type="FunFam" id="4.10.60.10:FF:000018">
    <property type="entry name" value="Splicing factor, arginine/serine-rich 7"/>
    <property type="match status" value="1"/>
</dbReference>
<dbReference type="Gene3D" id="3.30.70.330">
    <property type="match status" value="1"/>
</dbReference>
<dbReference type="Gene3D" id="4.10.60.10">
    <property type="entry name" value="Zinc finger, CCHC-type"/>
    <property type="match status" value="1"/>
</dbReference>
<dbReference type="InterPro" id="IPR012677">
    <property type="entry name" value="Nucleotide-bd_a/b_plait_sf"/>
</dbReference>
<dbReference type="InterPro" id="IPR035979">
    <property type="entry name" value="RBD_domain_sf"/>
</dbReference>
<dbReference type="InterPro" id="IPR000504">
    <property type="entry name" value="RRM_dom"/>
</dbReference>
<dbReference type="InterPro" id="IPR050907">
    <property type="entry name" value="SRSF"/>
</dbReference>
<dbReference type="InterPro" id="IPR001878">
    <property type="entry name" value="Znf_CCHC"/>
</dbReference>
<dbReference type="InterPro" id="IPR036875">
    <property type="entry name" value="Znf_CCHC_sf"/>
</dbReference>
<dbReference type="PANTHER" id="PTHR23147">
    <property type="entry name" value="SERINE/ARGININE RICH SPLICING FACTOR"/>
    <property type="match status" value="1"/>
</dbReference>
<dbReference type="Pfam" id="PF00076">
    <property type="entry name" value="RRM_1"/>
    <property type="match status" value="1"/>
</dbReference>
<dbReference type="Pfam" id="PF00098">
    <property type="entry name" value="zf-CCHC"/>
    <property type="match status" value="1"/>
</dbReference>
<dbReference type="SMART" id="SM00360">
    <property type="entry name" value="RRM"/>
    <property type="match status" value="1"/>
</dbReference>
<dbReference type="SMART" id="SM00343">
    <property type="entry name" value="ZnF_C2HC"/>
    <property type="match status" value="1"/>
</dbReference>
<dbReference type="SUPFAM" id="SSF57756">
    <property type="entry name" value="Retrovirus zinc finger-like domains"/>
    <property type="match status" value="1"/>
</dbReference>
<dbReference type="SUPFAM" id="SSF54928">
    <property type="entry name" value="RNA-binding domain, RBD"/>
    <property type="match status" value="1"/>
</dbReference>
<dbReference type="PROSITE" id="PS50102">
    <property type="entry name" value="RRM"/>
    <property type="match status" value="1"/>
</dbReference>
<dbReference type="PROSITE" id="PS50158">
    <property type="entry name" value="ZF_CCHC"/>
    <property type="match status" value="1"/>
</dbReference>
<protein>
    <recommendedName>
        <fullName>Serine/arginine-rich splicing factor RSZ21A</fullName>
    </recommendedName>
    <alternativeName>
        <fullName>RS-containing zinc finger protein 21A</fullName>
        <shortName>Os-RSZ21a</shortName>
        <shortName>Os-RSZp21a</shortName>
    </alternativeName>
</protein>